<sequence length="431" mass="45469">MSKIVKVIGREIIDSRGNPTVEAEVHLEGGFVGLAAAPSGASTGSREALELRDGDKSRFLGKGVLKAVAAVNGPIAQAVIGKDAKDQANIDKIMIDLDGTENKSQFGANAILAVSLAAAKAAAASKGMPLYEHIAELNGTPGKFSMPLPMMNIINGGEHADNNVDIQEFMIQPVGAKTLKEAVRIGSEVFHHLAKVLKAKGLNTAVGDEGGYAPNLGSNAEALAVIAEAVKAAGYELGKDITLAMDCAASEFYKDGKYVLAGEGNKAFTSEEFTHFLEDLTKQYPIVSIEDGLDESDWAGFKYQTEVLGDKIQLVGDDLFVTNTKILKEGIEKGVANSILIKFNQIGSLTETLAAIKMAKDAGYTAVISHRSGETEDATIADLAVGTAAGQIKTGSMSRSDRVAKYNQLIRIEEALGDRAPFNGLKEVKGQ</sequence>
<name>ENO_YERPA</name>
<accession>Q1C3Y6</accession>
<feature type="initiator methionine" description="Removed" evidence="1">
    <location>
        <position position="1"/>
    </location>
</feature>
<feature type="chain" id="PRO_0000267138" description="Enolase">
    <location>
        <begin position="2"/>
        <end position="431"/>
    </location>
</feature>
<feature type="active site" description="Proton donor" evidence="2">
    <location>
        <position position="209"/>
    </location>
</feature>
<feature type="active site" description="Proton acceptor" evidence="2">
    <location>
        <position position="342"/>
    </location>
</feature>
<feature type="binding site" evidence="2">
    <location>
        <position position="167"/>
    </location>
    <ligand>
        <name>(2R)-2-phosphoglycerate</name>
        <dbReference type="ChEBI" id="CHEBI:58289"/>
    </ligand>
</feature>
<feature type="binding site" evidence="2">
    <location>
        <position position="246"/>
    </location>
    <ligand>
        <name>Mg(2+)</name>
        <dbReference type="ChEBI" id="CHEBI:18420"/>
    </ligand>
</feature>
<feature type="binding site" evidence="2">
    <location>
        <position position="290"/>
    </location>
    <ligand>
        <name>Mg(2+)</name>
        <dbReference type="ChEBI" id="CHEBI:18420"/>
    </ligand>
</feature>
<feature type="binding site" evidence="2">
    <location>
        <position position="317"/>
    </location>
    <ligand>
        <name>Mg(2+)</name>
        <dbReference type="ChEBI" id="CHEBI:18420"/>
    </ligand>
</feature>
<feature type="binding site" evidence="2">
    <location>
        <position position="342"/>
    </location>
    <ligand>
        <name>(2R)-2-phosphoglycerate</name>
        <dbReference type="ChEBI" id="CHEBI:58289"/>
    </ligand>
</feature>
<feature type="binding site" evidence="2">
    <location>
        <position position="371"/>
    </location>
    <ligand>
        <name>(2R)-2-phosphoglycerate</name>
        <dbReference type="ChEBI" id="CHEBI:58289"/>
    </ligand>
</feature>
<feature type="binding site" evidence="2">
    <location>
        <position position="372"/>
    </location>
    <ligand>
        <name>(2R)-2-phosphoglycerate</name>
        <dbReference type="ChEBI" id="CHEBI:58289"/>
    </ligand>
</feature>
<feature type="binding site" evidence="2">
    <location>
        <position position="393"/>
    </location>
    <ligand>
        <name>(2R)-2-phosphoglycerate</name>
        <dbReference type="ChEBI" id="CHEBI:58289"/>
    </ligand>
</feature>
<dbReference type="EC" id="4.2.1.11" evidence="2"/>
<dbReference type="EMBL" id="CP000308">
    <property type="protein sequence ID" value="ABG14836.1"/>
    <property type="molecule type" value="Genomic_DNA"/>
</dbReference>
<dbReference type="RefSeq" id="WP_002209377.1">
    <property type="nucleotide sequence ID" value="NZ_CP009906.1"/>
</dbReference>
<dbReference type="SMR" id="Q1C3Y6"/>
<dbReference type="GeneID" id="96664252"/>
<dbReference type="KEGG" id="ypa:YPA_2874"/>
<dbReference type="UniPathway" id="UPA00109">
    <property type="reaction ID" value="UER00187"/>
</dbReference>
<dbReference type="Proteomes" id="UP000001971">
    <property type="component" value="Chromosome"/>
</dbReference>
<dbReference type="GO" id="GO:0009986">
    <property type="term" value="C:cell surface"/>
    <property type="evidence" value="ECO:0007669"/>
    <property type="project" value="UniProtKB-SubCell"/>
</dbReference>
<dbReference type="GO" id="GO:0005576">
    <property type="term" value="C:extracellular region"/>
    <property type="evidence" value="ECO:0007669"/>
    <property type="project" value="UniProtKB-SubCell"/>
</dbReference>
<dbReference type="GO" id="GO:0000015">
    <property type="term" value="C:phosphopyruvate hydratase complex"/>
    <property type="evidence" value="ECO:0007669"/>
    <property type="project" value="InterPro"/>
</dbReference>
<dbReference type="GO" id="GO:0000287">
    <property type="term" value="F:magnesium ion binding"/>
    <property type="evidence" value="ECO:0007669"/>
    <property type="project" value="UniProtKB-UniRule"/>
</dbReference>
<dbReference type="GO" id="GO:0004634">
    <property type="term" value="F:phosphopyruvate hydratase activity"/>
    <property type="evidence" value="ECO:0007669"/>
    <property type="project" value="UniProtKB-UniRule"/>
</dbReference>
<dbReference type="GO" id="GO:0006096">
    <property type="term" value="P:glycolytic process"/>
    <property type="evidence" value="ECO:0007669"/>
    <property type="project" value="UniProtKB-UniRule"/>
</dbReference>
<dbReference type="CDD" id="cd03313">
    <property type="entry name" value="enolase"/>
    <property type="match status" value="1"/>
</dbReference>
<dbReference type="FunFam" id="3.20.20.120:FF:000001">
    <property type="entry name" value="Enolase"/>
    <property type="match status" value="1"/>
</dbReference>
<dbReference type="FunFam" id="3.30.390.10:FF:000001">
    <property type="entry name" value="Enolase"/>
    <property type="match status" value="1"/>
</dbReference>
<dbReference type="Gene3D" id="3.20.20.120">
    <property type="entry name" value="Enolase-like C-terminal domain"/>
    <property type="match status" value="1"/>
</dbReference>
<dbReference type="Gene3D" id="3.30.390.10">
    <property type="entry name" value="Enolase-like, N-terminal domain"/>
    <property type="match status" value="1"/>
</dbReference>
<dbReference type="HAMAP" id="MF_00318">
    <property type="entry name" value="Enolase"/>
    <property type="match status" value="1"/>
</dbReference>
<dbReference type="InterPro" id="IPR000941">
    <property type="entry name" value="Enolase"/>
</dbReference>
<dbReference type="InterPro" id="IPR036849">
    <property type="entry name" value="Enolase-like_C_sf"/>
</dbReference>
<dbReference type="InterPro" id="IPR029017">
    <property type="entry name" value="Enolase-like_N"/>
</dbReference>
<dbReference type="InterPro" id="IPR020810">
    <property type="entry name" value="Enolase_C"/>
</dbReference>
<dbReference type="InterPro" id="IPR020809">
    <property type="entry name" value="Enolase_CS"/>
</dbReference>
<dbReference type="InterPro" id="IPR020811">
    <property type="entry name" value="Enolase_N"/>
</dbReference>
<dbReference type="NCBIfam" id="TIGR01060">
    <property type="entry name" value="eno"/>
    <property type="match status" value="1"/>
</dbReference>
<dbReference type="PANTHER" id="PTHR11902">
    <property type="entry name" value="ENOLASE"/>
    <property type="match status" value="1"/>
</dbReference>
<dbReference type="PANTHER" id="PTHR11902:SF1">
    <property type="entry name" value="ENOLASE"/>
    <property type="match status" value="1"/>
</dbReference>
<dbReference type="Pfam" id="PF00113">
    <property type="entry name" value="Enolase_C"/>
    <property type="match status" value="1"/>
</dbReference>
<dbReference type="Pfam" id="PF03952">
    <property type="entry name" value="Enolase_N"/>
    <property type="match status" value="1"/>
</dbReference>
<dbReference type="PIRSF" id="PIRSF001400">
    <property type="entry name" value="Enolase"/>
    <property type="match status" value="1"/>
</dbReference>
<dbReference type="PRINTS" id="PR00148">
    <property type="entry name" value="ENOLASE"/>
</dbReference>
<dbReference type="SFLD" id="SFLDF00002">
    <property type="entry name" value="enolase"/>
    <property type="match status" value="1"/>
</dbReference>
<dbReference type="SFLD" id="SFLDG00178">
    <property type="entry name" value="enolase"/>
    <property type="match status" value="1"/>
</dbReference>
<dbReference type="SMART" id="SM01192">
    <property type="entry name" value="Enolase_C"/>
    <property type="match status" value="1"/>
</dbReference>
<dbReference type="SMART" id="SM01193">
    <property type="entry name" value="Enolase_N"/>
    <property type="match status" value="1"/>
</dbReference>
<dbReference type="SUPFAM" id="SSF51604">
    <property type="entry name" value="Enolase C-terminal domain-like"/>
    <property type="match status" value="1"/>
</dbReference>
<dbReference type="SUPFAM" id="SSF54826">
    <property type="entry name" value="Enolase N-terminal domain-like"/>
    <property type="match status" value="1"/>
</dbReference>
<dbReference type="PROSITE" id="PS00164">
    <property type="entry name" value="ENOLASE"/>
    <property type="match status" value="1"/>
</dbReference>
<proteinExistence type="inferred from homology"/>
<organism>
    <name type="scientific">Yersinia pestis bv. Antiqua (strain Antiqua)</name>
    <dbReference type="NCBI Taxonomy" id="360102"/>
    <lineage>
        <taxon>Bacteria</taxon>
        <taxon>Pseudomonadati</taxon>
        <taxon>Pseudomonadota</taxon>
        <taxon>Gammaproteobacteria</taxon>
        <taxon>Enterobacterales</taxon>
        <taxon>Yersiniaceae</taxon>
        <taxon>Yersinia</taxon>
    </lineage>
</organism>
<protein>
    <recommendedName>
        <fullName evidence="2">Enolase</fullName>
        <ecNumber evidence="2">4.2.1.11</ecNumber>
    </recommendedName>
    <alternativeName>
        <fullName evidence="2">2-phospho-D-glycerate hydro-lyase</fullName>
    </alternativeName>
    <alternativeName>
        <fullName evidence="2">2-phosphoglycerate dehydratase</fullName>
    </alternativeName>
</protein>
<reference key="1">
    <citation type="journal article" date="2006" name="J. Bacteriol.">
        <title>Complete genome sequence of Yersinia pestis strains Antiqua and Nepal516: evidence of gene reduction in an emerging pathogen.</title>
        <authorList>
            <person name="Chain P.S.G."/>
            <person name="Hu P."/>
            <person name="Malfatti S.A."/>
            <person name="Radnedge L."/>
            <person name="Larimer F."/>
            <person name="Vergez L.M."/>
            <person name="Worsham P."/>
            <person name="Chu M.C."/>
            <person name="Andersen G.L."/>
        </authorList>
    </citation>
    <scope>NUCLEOTIDE SEQUENCE [LARGE SCALE GENOMIC DNA]</scope>
    <source>
        <strain>Antiqua</strain>
    </source>
</reference>
<comment type="function">
    <text evidence="2">Catalyzes the reversible conversion of 2-phosphoglycerate (2-PG) into phosphoenolpyruvate (PEP). It is essential for the degradation of carbohydrates via glycolysis.</text>
</comment>
<comment type="catalytic activity">
    <reaction evidence="2">
        <text>(2R)-2-phosphoglycerate = phosphoenolpyruvate + H2O</text>
        <dbReference type="Rhea" id="RHEA:10164"/>
        <dbReference type="ChEBI" id="CHEBI:15377"/>
        <dbReference type="ChEBI" id="CHEBI:58289"/>
        <dbReference type="ChEBI" id="CHEBI:58702"/>
        <dbReference type="EC" id="4.2.1.11"/>
    </reaction>
</comment>
<comment type="cofactor">
    <cofactor evidence="2">
        <name>Mg(2+)</name>
        <dbReference type="ChEBI" id="CHEBI:18420"/>
    </cofactor>
    <text evidence="2">Binds a second Mg(2+) ion via substrate during catalysis.</text>
</comment>
<comment type="pathway">
    <text evidence="2">Carbohydrate degradation; glycolysis; pyruvate from D-glyceraldehyde 3-phosphate: step 4/5.</text>
</comment>
<comment type="subunit">
    <text evidence="2">Component of the RNA degradosome, a multiprotein complex involved in RNA processing and mRNA degradation.</text>
</comment>
<comment type="subcellular location">
    <subcellularLocation>
        <location evidence="2">Cytoplasm</location>
    </subcellularLocation>
    <subcellularLocation>
        <location evidence="2">Secreted</location>
    </subcellularLocation>
    <subcellularLocation>
        <location evidence="2">Cell surface</location>
    </subcellularLocation>
    <text evidence="2">Fractions of enolase are present in both the cytoplasm and on the cell surface.</text>
</comment>
<comment type="similarity">
    <text evidence="2">Belongs to the enolase family.</text>
</comment>
<gene>
    <name evidence="2" type="primary">eno</name>
    <name type="ordered locus">YPA_2874</name>
</gene>
<keyword id="KW-0963">Cytoplasm</keyword>
<keyword id="KW-0324">Glycolysis</keyword>
<keyword id="KW-0456">Lyase</keyword>
<keyword id="KW-0460">Magnesium</keyword>
<keyword id="KW-0479">Metal-binding</keyword>
<keyword id="KW-0964">Secreted</keyword>
<evidence type="ECO:0000250" key="1"/>
<evidence type="ECO:0000255" key="2">
    <source>
        <dbReference type="HAMAP-Rule" id="MF_00318"/>
    </source>
</evidence>